<feature type="chain" id="PRO_1000093583" description="Sugar fermentation stimulation protein homolog">
    <location>
        <begin position="1"/>
        <end position="237"/>
    </location>
</feature>
<organism>
    <name type="scientific">Pseudomonas putida (strain W619)</name>
    <dbReference type="NCBI Taxonomy" id="390235"/>
    <lineage>
        <taxon>Bacteria</taxon>
        <taxon>Pseudomonadati</taxon>
        <taxon>Pseudomonadota</taxon>
        <taxon>Gammaproteobacteria</taxon>
        <taxon>Pseudomonadales</taxon>
        <taxon>Pseudomonadaceae</taxon>
        <taxon>Pseudomonas</taxon>
    </lineage>
</organism>
<comment type="similarity">
    <text evidence="1">Belongs to the SfsA family.</text>
</comment>
<protein>
    <recommendedName>
        <fullName evidence="1">Sugar fermentation stimulation protein homolog</fullName>
    </recommendedName>
</protein>
<gene>
    <name evidence="1" type="primary">sfsA</name>
    <name type="ordered locus">PputW619_0743</name>
</gene>
<dbReference type="EMBL" id="CP000949">
    <property type="protein sequence ID" value="ACA71248.1"/>
    <property type="molecule type" value="Genomic_DNA"/>
</dbReference>
<dbReference type="SMR" id="B1J2E3"/>
<dbReference type="STRING" id="390235.PputW619_0743"/>
<dbReference type="KEGG" id="ppw:PputW619_0743"/>
<dbReference type="eggNOG" id="COG1489">
    <property type="taxonomic scope" value="Bacteria"/>
</dbReference>
<dbReference type="HOGENOM" id="CLU_052299_2_0_6"/>
<dbReference type="OrthoDB" id="9802365at2"/>
<dbReference type="GO" id="GO:0003677">
    <property type="term" value="F:DNA binding"/>
    <property type="evidence" value="ECO:0007669"/>
    <property type="project" value="InterPro"/>
</dbReference>
<dbReference type="CDD" id="cd22359">
    <property type="entry name" value="SfsA-like_bacterial"/>
    <property type="match status" value="1"/>
</dbReference>
<dbReference type="FunFam" id="2.40.50.580:FF:000001">
    <property type="entry name" value="Sugar fermentation stimulation protein A"/>
    <property type="match status" value="1"/>
</dbReference>
<dbReference type="Gene3D" id="2.40.50.580">
    <property type="match status" value="1"/>
</dbReference>
<dbReference type="Gene3D" id="3.40.1350.60">
    <property type="match status" value="1"/>
</dbReference>
<dbReference type="HAMAP" id="MF_00095">
    <property type="entry name" value="SfsA"/>
    <property type="match status" value="1"/>
</dbReference>
<dbReference type="InterPro" id="IPR005224">
    <property type="entry name" value="SfsA"/>
</dbReference>
<dbReference type="InterPro" id="IPR040452">
    <property type="entry name" value="SfsA_C"/>
</dbReference>
<dbReference type="InterPro" id="IPR041465">
    <property type="entry name" value="SfsA_N"/>
</dbReference>
<dbReference type="NCBIfam" id="TIGR00230">
    <property type="entry name" value="sfsA"/>
    <property type="match status" value="1"/>
</dbReference>
<dbReference type="PANTHER" id="PTHR30545">
    <property type="entry name" value="SUGAR FERMENTATION STIMULATION PROTEIN A"/>
    <property type="match status" value="1"/>
</dbReference>
<dbReference type="PANTHER" id="PTHR30545:SF2">
    <property type="entry name" value="SUGAR FERMENTATION STIMULATION PROTEIN A"/>
    <property type="match status" value="1"/>
</dbReference>
<dbReference type="Pfam" id="PF03749">
    <property type="entry name" value="SfsA"/>
    <property type="match status" value="1"/>
</dbReference>
<dbReference type="Pfam" id="PF17746">
    <property type="entry name" value="SfsA_N"/>
    <property type="match status" value="1"/>
</dbReference>
<reference key="1">
    <citation type="submission" date="2008-02" db="EMBL/GenBank/DDBJ databases">
        <title>Complete sequence of Pseudomonas putida W619.</title>
        <authorList>
            <person name="Copeland A."/>
            <person name="Lucas S."/>
            <person name="Lapidus A."/>
            <person name="Barry K."/>
            <person name="Detter J.C."/>
            <person name="Glavina del Rio T."/>
            <person name="Dalin E."/>
            <person name="Tice H."/>
            <person name="Pitluck S."/>
            <person name="Chain P."/>
            <person name="Malfatti S."/>
            <person name="Shin M."/>
            <person name="Vergez L."/>
            <person name="Schmutz J."/>
            <person name="Larimer F."/>
            <person name="Land M."/>
            <person name="Hauser L."/>
            <person name="Kyrpides N."/>
            <person name="Kim E."/>
            <person name="Taghavi S."/>
            <person name="Vangronsveld D."/>
            <person name="van der Lelie D."/>
            <person name="Richardson P."/>
        </authorList>
    </citation>
    <scope>NUCLEOTIDE SEQUENCE [LARGE SCALE GENOMIC DNA]</scope>
    <source>
        <strain>W619</strain>
    </source>
</reference>
<name>SFSA_PSEPW</name>
<sequence>MVFFPPLEQGRLLRRYKRFLADIELANGEQLTIHCPNTGSMLNCMREGGQVWFSRSNDPKRKLPGTWEISETPQGRLACVNTGRANALVEEALRAGVIRELAGFTALKREVAYGEEGSRVDFRLEFDHGPAYVEVKSVTLGYPDTAVAAFPDAVTQRGAKHLRELATLARQGIRAVQLYCVNLTGIEAVRPADEIDAAYARALRAAVADGVEVLAYGARLDAELIVIDRPLPVLLNP</sequence>
<proteinExistence type="inferred from homology"/>
<accession>B1J2E3</accession>
<evidence type="ECO:0000255" key="1">
    <source>
        <dbReference type="HAMAP-Rule" id="MF_00095"/>
    </source>
</evidence>